<name>LPXC_RICTY</name>
<dbReference type="EC" id="3.5.1.108" evidence="1"/>
<dbReference type="EMBL" id="AE017197">
    <property type="protein sequence ID" value="AAU03727.1"/>
    <property type="molecule type" value="Genomic_DNA"/>
</dbReference>
<dbReference type="RefSeq" id="WP_011190712.1">
    <property type="nucleotide sequence ID" value="NC_006142.1"/>
</dbReference>
<dbReference type="SMR" id="Q68XB5"/>
<dbReference type="KEGG" id="rty:RT0246"/>
<dbReference type="eggNOG" id="COG0774">
    <property type="taxonomic scope" value="Bacteria"/>
</dbReference>
<dbReference type="HOGENOM" id="CLU_046528_1_0_5"/>
<dbReference type="OrthoDB" id="9802746at2"/>
<dbReference type="UniPathway" id="UPA00359">
    <property type="reaction ID" value="UER00478"/>
</dbReference>
<dbReference type="Proteomes" id="UP000000604">
    <property type="component" value="Chromosome"/>
</dbReference>
<dbReference type="GO" id="GO:0016020">
    <property type="term" value="C:membrane"/>
    <property type="evidence" value="ECO:0007669"/>
    <property type="project" value="GOC"/>
</dbReference>
<dbReference type="GO" id="GO:0046872">
    <property type="term" value="F:metal ion binding"/>
    <property type="evidence" value="ECO:0007669"/>
    <property type="project" value="UniProtKB-KW"/>
</dbReference>
<dbReference type="GO" id="GO:0103117">
    <property type="term" value="F:UDP-3-O-acyl-N-acetylglucosamine deacetylase activity"/>
    <property type="evidence" value="ECO:0007669"/>
    <property type="project" value="UniProtKB-UniRule"/>
</dbReference>
<dbReference type="GO" id="GO:0009245">
    <property type="term" value="P:lipid A biosynthetic process"/>
    <property type="evidence" value="ECO:0007669"/>
    <property type="project" value="UniProtKB-UniRule"/>
</dbReference>
<dbReference type="Gene3D" id="3.30.230.20">
    <property type="entry name" value="lpxc deacetylase, domain 1"/>
    <property type="match status" value="1"/>
</dbReference>
<dbReference type="Gene3D" id="3.30.1700.10">
    <property type="entry name" value="lpxc deacetylase, domain 2"/>
    <property type="match status" value="1"/>
</dbReference>
<dbReference type="HAMAP" id="MF_00388">
    <property type="entry name" value="LpxC"/>
    <property type="match status" value="1"/>
</dbReference>
<dbReference type="InterPro" id="IPR020568">
    <property type="entry name" value="Ribosomal_Su5_D2-typ_SF"/>
</dbReference>
<dbReference type="InterPro" id="IPR004463">
    <property type="entry name" value="UDP-acyl_GlcNac_deAcase"/>
</dbReference>
<dbReference type="InterPro" id="IPR011334">
    <property type="entry name" value="UDP-acyl_GlcNac_deAcase_C"/>
</dbReference>
<dbReference type="InterPro" id="IPR015870">
    <property type="entry name" value="UDP-acyl_N-AcGlcN_deAcase_N"/>
</dbReference>
<dbReference type="NCBIfam" id="TIGR00325">
    <property type="entry name" value="lpxC"/>
    <property type="match status" value="1"/>
</dbReference>
<dbReference type="PANTHER" id="PTHR33694">
    <property type="entry name" value="UDP-3-O-ACYL-N-ACETYLGLUCOSAMINE DEACETYLASE 1, MITOCHONDRIAL-RELATED"/>
    <property type="match status" value="1"/>
</dbReference>
<dbReference type="PANTHER" id="PTHR33694:SF1">
    <property type="entry name" value="UDP-3-O-ACYL-N-ACETYLGLUCOSAMINE DEACETYLASE 1, MITOCHONDRIAL-RELATED"/>
    <property type="match status" value="1"/>
</dbReference>
<dbReference type="Pfam" id="PF03331">
    <property type="entry name" value="LpxC"/>
    <property type="match status" value="1"/>
</dbReference>
<dbReference type="SUPFAM" id="SSF54211">
    <property type="entry name" value="Ribosomal protein S5 domain 2-like"/>
    <property type="match status" value="2"/>
</dbReference>
<reference key="1">
    <citation type="journal article" date="2004" name="J. Bacteriol.">
        <title>Complete genome sequence of Rickettsia typhi and comparison with sequences of other Rickettsiae.</title>
        <authorList>
            <person name="McLeod M.P."/>
            <person name="Qin X."/>
            <person name="Karpathy S.E."/>
            <person name="Gioia J."/>
            <person name="Highlander S.K."/>
            <person name="Fox G.E."/>
            <person name="McNeill T.Z."/>
            <person name="Jiang H."/>
            <person name="Muzny D."/>
            <person name="Jacob L.S."/>
            <person name="Hawes A.C."/>
            <person name="Sodergren E."/>
            <person name="Gill R."/>
            <person name="Hume J."/>
            <person name="Morgan M."/>
            <person name="Fan G."/>
            <person name="Amin A.G."/>
            <person name="Gibbs R.A."/>
            <person name="Hong C."/>
            <person name="Yu X.-J."/>
            <person name="Walker D.H."/>
            <person name="Weinstock G.M."/>
        </authorList>
    </citation>
    <scope>NUCLEOTIDE SEQUENCE [LARGE SCALE GENOMIC DNA]</scope>
    <source>
        <strain>ATCC VR-144 / Wilmington</strain>
    </source>
</reference>
<keyword id="KW-0378">Hydrolase</keyword>
<keyword id="KW-0441">Lipid A biosynthesis</keyword>
<keyword id="KW-0444">Lipid biosynthesis</keyword>
<keyword id="KW-0443">Lipid metabolism</keyword>
<keyword id="KW-0479">Metal-binding</keyword>
<keyword id="KW-0862">Zinc</keyword>
<protein>
    <recommendedName>
        <fullName evidence="1">UDP-3-O-acyl-N-acetylglucosamine deacetylase</fullName>
        <shortName evidence="1">UDP-3-O-acyl-GlcNAc deacetylase</shortName>
        <ecNumber evidence="1">3.5.1.108</ecNumber>
    </recommendedName>
    <alternativeName>
        <fullName evidence="1">UDP-3-O-[R-3-hydroxymyristoyl]-N-acetylglucosamine deacetylase</fullName>
    </alternativeName>
</protein>
<feature type="chain" id="PRO_0000191952" description="UDP-3-O-acyl-N-acetylglucosamine deacetylase">
    <location>
        <begin position="1"/>
        <end position="289"/>
    </location>
</feature>
<feature type="active site" description="Proton donor" evidence="1">
    <location>
        <position position="263"/>
    </location>
</feature>
<feature type="binding site" evidence="1">
    <location>
        <position position="79"/>
    </location>
    <ligand>
        <name>Zn(2+)</name>
        <dbReference type="ChEBI" id="CHEBI:29105"/>
    </ligand>
</feature>
<feature type="binding site" evidence="1">
    <location>
        <position position="236"/>
    </location>
    <ligand>
        <name>Zn(2+)</name>
        <dbReference type="ChEBI" id="CHEBI:29105"/>
    </ligand>
</feature>
<feature type="binding site" evidence="1">
    <location>
        <position position="240"/>
    </location>
    <ligand>
        <name>Zn(2+)</name>
        <dbReference type="ChEBI" id="CHEBI:29105"/>
    </ligand>
</feature>
<accession>Q68XB5</accession>
<sequence>MQQSTLLKPVSCYGIGVHTGKRTQLTIEPAKENTGIIFIRTDISSENNYIEASYYNVSDTLLSTTISNNHKIQVSTIEHLMAALWGCSIDNAVIKIDGPEVPIMDGSSKPFVFMIECAGKKLQNAPKKYLKILKEIKVVNKDCELYCTPSEHITVDLTIDFSSKAIGKQNLNFGVQESFTKNIADARTFGFIKDVEYLKSKGLAQGASFENAIGIDEHDKVLNPSGLRYADEFVRHKLLDLFGDLYTSGISIVSAIKGYKTSHAFNNELLHKIFSDTTSYKFVTSNELS</sequence>
<proteinExistence type="inferred from homology"/>
<comment type="function">
    <text evidence="1">Catalyzes the hydrolysis of UDP-3-O-myristoyl-N-acetylglucosamine to form UDP-3-O-myristoylglucosamine and acetate, the committed step in lipid A biosynthesis.</text>
</comment>
<comment type="catalytic activity">
    <reaction evidence="1">
        <text>a UDP-3-O-[(3R)-3-hydroxyacyl]-N-acetyl-alpha-D-glucosamine + H2O = a UDP-3-O-[(3R)-3-hydroxyacyl]-alpha-D-glucosamine + acetate</text>
        <dbReference type="Rhea" id="RHEA:67816"/>
        <dbReference type="ChEBI" id="CHEBI:15377"/>
        <dbReference type="ChEBI" id="CHEBI:30089"/>
        <dbReference type="ChEBI" id="CHEBI:137740"/>
        <dbReference type="ChEBI" id="CHEBI:173225"/>
        <dbReference type="EC" id="3.5.1.108"/>
    </reaction>
</comment>
<comment type="cofactor">
    <cofactor evidence="1">
        <name>Zn(2+)</name>
        <dbReference type="ChEBI" id="CHEBI:29105"/>
    </cofactor>
</comment>
<comment type="pathway">
    <text evidence="1">Glycolipid biosynthesis; lipid IV(A) biosynthesis; lipid IV(A) from (3R)-3-hydroxytetradecanoyl-[acyl-carrier-protein] and UDP-N-acetyl-alpha-D-glucosamine: step 2/6.</text>
</comment>
<comment type="similarity">
    <text evidence="1">Belongs to the LpxC family.</text>
</comment>
<gene>
    <name evidence="1" type="primary">lpxC</name>
    <name type="ordered locus">RT0246</name>
</gene>
<organism>
    <name type="scientific">Rickettsia typhi (strain ATCC VR-144 / Wilmington)</name>
    <dbReference type="NCBI Taxonomy" id="257363"/>
    <lineage>
        <taxon>Bacteria</taxon>
        <taxon>Pseudomonadati</taxon>
        <taxon>Pseudomonadota</taxon>
        <taxon>Alphaproteobacteria</taxon>
        <taxon>Rickettsiales</taxon>
        <taxon>Rickettsiaceae</taxon>
        <taxon>Rickettsieae</taxon>
        <taxon>Rickettsia</taxon>
        <taxon>typhus group</taxon>
    </lineage>
</organism>
<evidence type="ECO:0000255" key="1">
    <source>
        <dbReference type="HAMAP-Rule" id="MF_00388"/>
    </source>
</evidence>